<geneLocation type="chloroplast"/>
<comment type="function">
    <text evidence="1">Usually encoded in the trnK tRNA gene intron. Probably assists in splicing its own and other chloroplast group II introns.</text>
</comment>
<comment type="subcellular location">
    <subcellularLocation>
        <location>Plastid</location>
        <location>Chloroplast</location>
    </subcellularLocation>
</comment>
<comment type="similarity">
    <text evidence="1">Belongs to the intron maturase 2 family. MatK subfamily.</text>
</comment>
<evidence type="ECO:0000255" key="1">
    <source>
        <dbReference type="HAMAP-Rule" id="MF_01390"/>
    </source>
</evidence>
<name>MATK_EUCUL</name>
<organism>
    <name type="scientific">Eucommia ulmoides</name>
    <name type="common">Hardy rubber tree</name>
    <dbReference type="NCBI Taxonomy" id="4392"/>
    <lineage>
        <taxon>Eukaryota</taxon>
        <taxon>Viridiplantae</taxon>
        <taxon>Streptophyta</taxon>
        <taxon>Embryophyta</taxon>
        <taxon>Tracheophyta</taxon>
        <taxon>Spermatophyta</taxon>
        <taxon>Magnoliopsida</taxon>
        <taxon>eudicotyledons</taxon>
        <taxon>Gunneridae</taxon>
        <taxon>Pentapetalae</taxon>
        <taxon>asterids</taxon>
        <taxon>lamiids</taxon>
        <taxon>Garryales</taxon>
        <taxon>Eucommiaceae</taxon>
        <taxon>Eucommia</taxon>
    </lineage>
</organism>
<keyword id="KW-0150">Chloroplast</keyword>
<keyword id="KW-0507">mRNA processing</keyword>
<keyword id="KW-0934">Plastid</keyword>
<keyword id="KW-0694">RNA-binding</keyword>
<keyword id="KW-0819">tRNA processing</keyword>
<feature type="chain" id="PRO_0000143381" description="Maturase K">
    <location>
        <begin position="1"/>
        <end position="509"/>
    </location>
</feature>
<sequence length="509" mass="60085">MEEFQRSLQLARSHEHDFLYPLIFQEYIYALAHNHVLNRSISSLLETKGSDNKSSLLIVKRLIPRMYQQNYLIIPENDSNQNPFGGRNNNLYSQMISEGFAVIVEIPFSLRLLAFLEGNEQERLKWKNLRSIHSTFPFLEDSFSHFNYVLDILIPHPVHLEILVQILRYWVKDTSSLHLLRFYLYQSHNWNSLITPKKSSSFFSKRNKRFFFFLYNSHVRESESIFVFLCNQSSHLRSLSSEDLLERIYFYGKIERLIEVFANAFPVMTLRLFKDPFMHYVRYQGKSILGSKGTSLLMNKWKYYLVHLWQCHFYLWSPPGRIYRTQLPNHSLDFMGYFSSVRLNPSTIRSQMLENAFLIANAIRNFETVVPILHLIASLAKAKFCNVFGYPISKPVWADLSDSDIIDRFGRICRNLSHYYSGSSQKKSLYQIKYILRLSCARTLARKHKMSVRVFLKRFDSELLEEFLTAEEQVLSLTFSRASSAFLGLDRGRVWYLDIFCINDRASHE</sequence>
<gene>
    <name evidence="1" type="primary">matK</name>
</gene>
<dbReference type="EMBL" id="AF345323">
    <property type="protein sequence ID" value="AAN03710.1"/>
    <property type="molecule type" value="Genomic_DNA"/>
</dbReference>
<dbReference type="RefSeq" id="YP_009493565.1">
    <property type="nucleotide sequence ID" value="NC_037948.1"/>
</dbReference>
<dbReference type="GeneID" id="36954078"/>
<dbReference type="GO" id="GO:0009507">
    <property type="term" value="C:chloroplast"/>
    <property type="evidence" value="ECO:0007669"/>
    <property type="project" value="UniProtKB-SubCell"/>
</dbReference>
<dbReference type="GO" id="GO:0003723">
    <property type="term" value="F:RNA binding"/>
    <property type="evidence" value="ECO:0007669"/>
    <property type="project" value="UniProtKB-KW"/>
</dbReference>
<dbReference type="GO" id="GO:0006397">
    <property type="term" value="P:mRNA processing"/>
    <property type="evidence" value="ECO:0007669"/>
    <property type="project" value="UniProtKB-KW"/>
</dbReference>
<dbReference type="GO" id="GO:0008380">
    <property type="term" value="P:RNA splicing"/>
    <property type="evidence" value="ECO:0007669"/>
    <property type="project" value="UniProtKB-UniRule"/>
</dbReference>
<dbReference type="GO" id="GO:0008033">
    <property type="term" value="P:tRNA processing"/>
    <property type="evidence" value="ECO:0007669"/>
    <property type="project" value="UniProtKB-KW"/>
</dbReference>
<dbReference type="HAMAP" id="MF_01390">
    <property type="entry name" value="MatK"/>
    <property type="match status" value="1"/>
</dbReference>
<dbReference type="InterPro" id="IPR024937">
    <property type="entry name" value="Domain_X"/>
</dbReference>
<dbReference type="InterPro" id="IPR002866">
    <property type="entry name" value="Maturase_MatK"/>
</dbReference>
<dbReference type="InterPro" id="IPR024942">
    <property type="entry name" value="Maturase_MatK_N"/>
</dbReference>
<dbReference type="PANTHER" id="PTHR34811">
    <property type="entry name" value="MATURASE K"/>
    <property type="match status" value="1"/>
</dbReference>
<dbReference type="PANTHER" id="PTHR34811:SF1">
    <property type="entry name" value="MATURASE K"/>
    <property type="match status" value="1"/>
</dbReference>
<dbReference type="Pfam" id="PF01348">
    <property type="entry name" value="Intron_maturas2"/>
    <property type="match status" value="1"/>
</dbReference>
<dbReference type="Pfam" id="PF01824">
    <property type="entry name" value="MatK_N"/>
    <property type="match status" value="1"/>
</dbReference>
<proteinExistence type="inferred from homology"/>
<reference key="1">
    <citation type="journal article" date="2001" name="Plant Syst. Evol.">
        <title>Further evidence on paraphyly of the Celtidaceae from the chloroplast gene matK.</title>
        <authorList>
            <person name="Song B.-H."/>
            <person name="Wang X.-Q."/>
            <person name="Li F.-Z."/>
            <person name="Hong D.-Y."/>
        </authorList>
    </citation>
    <scope>NUCLEOTIDE SEQUENCE [GENOMIC DNA]</scope>
</reference>
<protein>
    <recommendedName>
        <fullName evidence="1">Maturase K</fullName>
    </recommendedName>
    <alternativeName>
        <fullName evidence="1">Intron maturase</fullName>
    </alternativeName>
</protein>
<accession>Q8MET5</accession>